<comment type="function">
    <text evidence="1">Forms part of the ribosomal stalk which helps the ribosome interact with GTP-bound translation factors. Is thus essential for accurate translation.</text>
</comment>
<comment type="subunit">
    <text evidence="1">Homodimer. Part of the ribosomal stalk of the 50S ribosomal subunit. Forms a multimeric L10(L12)X complex, where L10 forms an elongated spine to which 2 to 4 L12 dimers bind in a sequential fashion. Binds GTP-bound translation factors.</text>
</comment>
<comment type="similarity">
    <text evidence="1">Belongs to the bacterial ribosomal protein bL12 family.</text>
</comment>
<name>RL7_EHRCR</name>
<accession>Q2GFP2</accession>
<proteinExistence type="inferred from homology"/>
<gene>
    <name evidence="1" type="primary">rplL</name>
    <name type="ordered locus">ECH_0953</name>
</gene>
<reference key="1">
    <citation type="journal article" date="2006" name="PLoS Genet.">
        <title>Comparative genomics of emerging human ehrlichiosis agents.</title>
        <authorList>
            <person name="Dunning Hotopp J.C."/>
            <person name="Lin M."/>
            <person name="Madupu R."/>
            <person name="Crabtree J."/>
            <person name="Angiuoli S.V."/>
            <person name="Eisen J.A."/>
            <person name="Seshadri R."/>
            <person name="Ren Q."/>
            <person name="Wu M."/>
            <person name="Utterback T.R."/>
            <person name="Smith S."/>
            <person name="Lewis M."/>
            <person name="Khouri H."/>
            <person name="Zhang C."/>
            <person name="Niu H."/>
            <person name="Lin Q."/>
            <person name="Ohashi N."/>
            <person name="Zhi N."/>
            <person name="Nelson W.C."/>
            <person name="Brinkac L.M."/>
            <person name="Dodson R.J."/>
            <person name="Rosovitz M.J."/>
            <person name="Sundaram J.P."/>
            <person name="Daugherty S.C."/>
            <person name="Davidsen T."/>
            <person name="Durkin A.S."/>
            <person name="Gwinn M.L."/>
            <person name="Haft D.H."/>
            <person name="Selengut J.D."/>
            <person name="Sullivan S.A."/>
            <person name="Zafar N."/>
            <person name="Zhou L."/>
            <person name="Benahmed F."/>
            <person name="Forberger H."/>
            <person name="Halpin R."/>
            <person name="Mulligan S."/>
            <person name="Robinson J."/>
            <person name="White O."/>
            <person name="Rikihisa Y."/>
            <person name="Tettelin H."/>
        </authorList>
    </citation>
    <scope>NUCLEOTIDE SEQUENCE [LARGE SCALE GENOMIC DNA]</scope>
    <source>
        <strain>ATCC CRL-10679 / Arkansas</strain>
    </source>
</reference>
<protein>
    <recommendedName>
        <fullName evidence="1">Large ribosomal subunit protein bL12</fullName>
    </recommendedName>
    <alternativeName>
        <fullName evidence="2">50S ribosomal protein L7/L12</fullName>
    </alternativeName>
</protein>
<sequence>MSTVDIDSLVEQICSLDLCKAAELVEKMEQKLGFPKGGLLTAVPAAGGNQVEGGAAAEEKTDFSVVFESYAADKKISVIKAVRECTSLGLKEAKEFVEKEGAKELIEGKKYKKEEAEEIKKKLEDAGAKVSIK</sequence>
<evidence type="ECO:0000255" key="1">
    <source>
        <dbReference type="HAMAP-Rule" id="MF_00368"/>
    </source>
</evidence>
<evidence type="ECO:0000305" key="2"/>
<organism>
    <name type="scientific">Ehrlichia chaffeensis (strain ATCC CRL-10679 / Arkansas)</name>
    <dbReference type="NCBI Taxonomy" id="205920"/>
    <lineage>
        <taxon>Bacteria</taxon>
        <taxon>Pseudomonadati</taxon>
        <taxon>Pseudomonadota</taxon>
        <taxon>Alphaproteobacteria</taxon>
        <taxon>Rickettsiales</taxon>
        <taxon>Anaplasmataceae</taxon>
        <taxon>Ehrlichia</taxon>
    </lineage>
</organism>
<feature type="chain" id="PRO_1000195793" description="Large ribosomal subunit protein bL12">
    <location>
        <begin position="1"/>
        <end position="133"/>
    </location>
</feature>
<dbReference type="EMBL" id="CP000236">
    <property type="protein sequence ID" value="ABD45006.1"/>
    <property type="molecule type" value="Genomic_DNA"/>
</dbReference>
<dbReference type="RefSeq" id="WP_006010859.1">
    <property type="nucleotide sequence ID" value="NC_007799.1"/>
</dbReference>
<dbReference type="SMR" id="Q2GFP2"/>
<dbReference type="STRING" id="205920.ECH_0953"/>
<dbReference type="KEGG" id="ech:ECH_0953"/>
<dbReference type="eggNOG" id="COG0222">
    <property type="taxonomic scope" value="Bacteria"/>
</dbReference>
<dbReference type="HOGENOM" id="CLU_086499_3_0_5"/>
<dbReference type="OrthoDB" id="9811748at2"/>
<dbReference type="Proteomes" id="UP000008320">
    <property type="component" value="Chromosome"/>
</dbReference>
<dbReference type="GO" id="GO:1990904">
    <property type="term" value="C:ribonucleoprotein complex"/>
    <property type="evidence" value="ECO:0007669"/>
    <property type="project" value="UniProtKB-KW"/>
</dbReference>
<dbReference type="GO" id="GO:0005840">
    <property type="term" value="C:ribosome"/>
    <property type="evidence" value="ECO:0007669"/>
    <property type="project" value="UniProtKB-KW"/>
</dbReference>
<dbReference type="GO" id="GO:0003729">
    <property type="term" value="F:mRNA binding"/>
    <property type="evidence" value="ECO:0007669"/>
    <property type="project" value="TreeGrafter"/>
</dbReference>
<dbReference type="GO" id="GO:0003735">
    <property type="term" value="F:structural constituent of ribosome"/>
    <property type="evidence" value="ECO:0007669"/>
    <property type="project" value="InterPro"/>
</dbReference>
<dbReference type="GO" id="GO:0006412">
    <property type="term" value="P:translation"/>
    <property type="evidence" value="ECO:0007669"/>
    <property type="project" value="UniProtKB-UniRule"/>
</dbReference>
<dbReference type="CDD" id="cd00387">
    <property type="entry name" value="Ribosomal_L7_L12"/>
    <property type="match status" value="1"/>
</dbReference>
<dbReference type="FunFam" id="3.30.1390.10:FF:000001">
    <property type="entry name" value="50S ribosomal protein L7/L12"/>
    <property type="match status" value="1"/>
</dbReference>
<dbReference type="Gene3D" id="3.30.1390.10">
    <property type="match status" value="1"/>
</dbReference>
<dbReference type="Gene3D" id="1.20.5.710">
    <property type="entry name" value="Single helix bin"/>
    <property type="match status" value="1"/>
</dbReference>
<dbReference type="HAMAP" id="MF_00368">
    <property type="entry name" value="Ribosomal_bL12"/>
    <property type="match status" value="1"/>
</dbReference>
<dbReference type="InterPro" id="IPR000206">
    <property type="entry name" value="Ribosomal_bL12"/>
</dbReference>
<dbReference type="InterPro" id="IPR013823">
    <property type="entry name" value="Ribosomal_bL12_C"/>
</dbReference>
<dbReference type="InterPro" id="IPR014719">
    <property type="entry name" value="Ribosomal_bL12_C/ClpS-like"/>
</dbReference>
<dbReference type="InterPro" id="IPR036235">
    <property type="entry name" value="Ribosomal_bL12_oligo_N_sf"/>
</dbReference>
<dbReference type="NCBIfam" id="TIGR00855">
    <property type="entry name" value="L12"/>
    <property type="match status" value="1"/>
</dbReference>
<dbReference type="PANTHER" id="PTHR45987">
    <property type="entry name" value="39S RIBOSOMAL PROTEIN L12"/>
    <property type="match status" value="1"/>
</dbReference>
<dbReference type="PANTHER" id="PTHR45987:SF4">
    <property type="entry name" value="LARGE RIBOSOMAL SUBUNIT PROTEIN BL12M"/>
    <property type="match status" value="1"/>
</dbReference>
<dbReference type="Pfam" id="PF00542">
    <property type="entry name" value="Ribosomal_L12"/>
    <property type="match status" value="1"/>
</dbReference>
<dbReference type="SUPFAM" id="SSF54736">
    <property type="entry name" value="ClpS-like"/>
    <property type="match status" value="1"/>
</dbReference>
<dbReference type="SUPFAM" id="SSF48300">
    <property type="entry name" value="Ribosomal protein L7/12, oligomerisation (N-terminal) domain"/>
    <property type="match status" value="1"/>
</dbReference>
<keyword id="KW-1185">Reference proteome</keyword>
<keyword id="KW-0687">Ribonucleoprotein</keyword>
<keyword id="KW-0689">Ribosomal protein</keyword>